<accession>Q2TBC4</accession>
<accession>A2A3M0</accession>
<accession>A6PVU1</accession>
<accession>B3KQ15</accession>
<accession>Q5T3D4</accession>
<accession>Q9NSV1</accession>
<dbReference type="EMBL" id="AL137721">
    <property type="protein sequence ID" value="CAB70893.1"/>
    <property type="molecule type" value="mRNA"/>
</dbReference>
<dbReference type="EMBL" id="AK057184">
    <property type="protein sequence ID" value="BAG51877.1"/>
    <property type="molecule type" value="mRNA"/>
</dbReference>
<dbReference type="EMBL" id="AL365205">
    <property type="status" value="NOT_ANNOTATED_CDS"/>
    <property type="molecule type" value="Genomic_DNA"/>
</dbReference>
<dbReference type="EMBL" id="CH471081">
    <property type="protein sequence ID" value="EAX04063.1"/>
    <property type="molecule type" value="Genomic_DNA"/>
</dbReference>
<dbReference type="EMBL" id="BC110459">
    <property type="protein sequence ID" value="AAI10460.1"/>
    <property type="molecule type" value="mRNA"/>
</dbReference>
<dbReference type="CCDS" id="CCDS34449.1">
    <molecule id="Q2TBC4-3"/>
</dbReference>
<dbReference type="PIR" id="T46255">
    <property type="entry name" value="T46255"/>
</dbReference>
<dbReference type="RefSeq" id="NP_037529.3">
    <molecule id="Q2TBC4-3"/>
    <property type="nucleotide sequence ID" value="NM_013397.5"/>
</dbReference>
<dbReference type="BioGRID" id="118997">
    <property type="interactions" value="17"/>
</dbReference>
<dbReference type="FunCoup" id="Q2TBC4">
    <property type="interactions" value="177"/>
</dbReference>
<dbReference type="IntAct" id="Q2TBC4">
    <property type="interactions" value="7"/>
</dbReference>
<dbReference type="STRING" id="9606.ENSP00000404911"/>
<dbReference type="iPTMnet" id="Q2TBC4"/>
<dbReference type="PhosphoSitePlus" id="Q2TBC4"/>
<dbReference type="BioMuta" id="PRICKLE4"/>
<dbReference type="jPOST" id="Q2TBC4"/>
<dbReference type="MassIVE" id="Q2TBC4"/>
<dbReference type="PaxDb" id="9606-ENSP00000377806"/>
<dbReference type="ProteomicsDB" id="61489">
    <molecule id="Q2TBC4-2"/>
</dbReference>
<dbReference type="Antibodypedia" id="78164">
    <property type="antibodies" value="22 antibodies from 10 providers"/>
</dbReference>
<dbReference type="DNASU" id="29964"/>
<dbReference type="Ensembl" id="ENST00000359201.6">
    <molecule id="Q2TBC4-1"/>
    <property type="protein sequence ID" value="ENSP00000352128.6"/>
    <property type="gene ID" value="ENSG00000278224.7"/>
</dbReference>
<dbReference type="Ensembl" id="ENST00000394259.5">
    <molecule id="Q2TBC4-2"/>
    <property type="protein sequence ID" value="ENSP00000377802.1"/>
    <property type="gene ID" value="ENSG00000278224.7"/>
</dbReference>
<dbReference type="Ensembl" id="ENST00000394260.2">
    <molecule id="Q2TBC4-1"/>
    <property type="protein sequence ID" value="ENSP00000377803.1"/>
    <property type="gene ID" value="ENSG00000278224.7"/>
</dbReference>
<dbReference type="Ensembl" id="ENST00000458694.6">
    <molecule id="Q2TBC4-3"/>
    <property type="protein sequence ID" value="ENSP00000404911.1"/>
    <property type="gene ID" value="ENSG00000278224.7"/>
</dbReference>
<dbReference type="GeneID" id="29964"/>
<dbReference type="KEGG" id="hsa:29964"/>
<dbReference type="MANE-Select" id="ENST00000458694.6">
    <molecule id="Q2TBC4-3"/>
    <property type="protein sequence ID" value="ENSP00000404911.1"/>
    <property type="RefSeq nucleotide sequence ID" value="NM_013397.6"/>
    <property type="RefSeq protein sequence ID" value="NP_037529.3"/>
</dbReference>
<dbReference type="UCSC" id="uc011duf.2">
    <molecule id="Q2TBC4-1"/>
    <property type="organism name" value="human"/>
</dbReference>
<dbReference type="AGR" id="HGNC:16805"/>
<dbReference type="CTD" id="29964"/>
<dbReference type="DisGeNET" id="29964"/>
<dbReference type="GeneCards" id="PRICKLE4"/>
<dbReference type="HGNC" id="HGNC:16805">
    <property type="gene designation" value="PRICKLE4"/>
</dbReference>
<dbReference type="HPA" id="ENSG00000278224">
    <property type="expression patterns" value="Low tissue specificity"/>
</dbReference>
<dbReference type="MIM" id="611389">
    <property type="type" value="gene"/>
</dbReference>
<dbReference type="neXtProt" id="NX_Q2TBC4"/>
<dbReference type="OpenTargets" id="ENSG00000124593"/>
<dbReference type="PharmGKB" id="PA162400083"/>
<dbReference type="VEuPathDB" id="HostDB:ENSG00000278224"/>
<dbReference type="eggNOG" id="KOG1704">
    <property type="taxonomic scope" value="Eukaryota"/>
</dbReference>
<dbReference type="GeneTree" id="ENSGT00940000161789"/>
<dbReference type="HOGENOM" id="CLU_057441_1_0_1"/>
<dbReference type="InParanoid" id="Q2TBC4"/>
<dbReference type="OMA" id="LNSGWPH"/>
<dbReference type="OrthoDB" id="10069167at2759"/>
<dbReference type="PAN-GO" id="Q2TBC4">
    <property type="GO annotations" value="9 GO annotations based on evolutionary models"/>
</dbReference>
<dbReference type="PhylomeDB" id="Q2TBC4"/>
<dbReference type="TreeFam" id="TF313265"/>
<dbReference type="PathwayCommons" id="Q2TBC4"/>
<dbReference type="BioGRID-ORCS" id="29964">
    <property type="hits" value="15 hits in 1161 CRISPR screens"/>
</dbReference>
<dbReference type="GeneWiki" id="C6orf49"/>
<dbReference type="GenomeRNAi" id="29964"/>
<dbReference type="Pharos" id="Q2TBC4">
    <property type="development level" value="Tdark"/>
</dbReference>
<dbReference type="PRO" id="PR:Q2TBC4"/>
<dbReference type="Proteomes" id="UP000005640">
    <property type="component" value="Chromosome 6"/>
</dbReference>
<dbReference type="RNAct" id="Q2TBC4">
    <property type="molecule type" value="protein"/>
</dbReference>
<dbReference type="Bgee" id="ENSG00000278224">
    <property type="expression patterns" value="Expressed in male germ line stem cell (sensu Vertebrata) in testis and 94 other cell types or tissues"/>
</dbReference>
<dbReference type="ExpressionAtlas" id="Q2TBC4">
    <property type="expression patterns" value="baseline and differential"/>
</dbReference>
<dbReference type="GO" id="GO:0005912">
    <property type="term" value="C:adherens junction"/>
    <property type="evidence" value="ECO:0000318"/>
    <property type="project" value="GO_Central"/>
</dbReference>
<dbReference type="GO" id="GO:0031941">
    <property type="term" value="C:filamentous actin"/>
    <property type="evidence" value="ECO:0000318"/>
    <property type="project" value="GO_Central"/>
</dbReference>
<dbReference type="GO" id="GO:0005634">
    <property type="term" value="C:nucleus"/>
    <property type="evidence" value="ECO:0000303"/>
    <property type="project" value="UniProtKB"/>
</dbReference>
<dbReference type="GO" id="GO:0001725">
    <property type="term" value="C:stress fiber"/>
    <property type="evidence" value="ECO:0000318"/>
    <property type="project" value="GO_Central"/>
</dbReference>
<dbReference type="GO" id="GO:0030018">
    <property type="term" value="C:Z disc"/>
    <property type="evidence" value="ECO:0000318"/>
    <property type="project" value="GO_Central"/>
</dbReference>
<dbReference type="GO" id="GO:0003779">
    <property type="term" value="F:actin binding"/>
    <property type="evidence" value="ECO:0000318"/>
    <property type="project" value="GO_Central"/>
</dbReference>
<dbReference type="GO" id="GO:0051371">
    <property type="term" value="F:muscle alpha-actinin binding"/>
    <property type="evidence" value="ECO:0000318"/>
    <property type="project" value="GO_Central"/>
</dbReference>
<dbReference type="GO" id="GO:0008270">
    <property type="term" value="F:zinc ion binding"/>
    <property type="evidence" value="ECO:0007669"/>
    <property type="project" value="InterPro"/>
</dbReference>
<dbReference type="GO" id="GO:0030036">
    <property type="term" value="P:actin cytoskeleton organization"/>
    <property type="evidence" value="ECO:0000318"/>
    <property type="project" value="GO_Central"/>
</dbReference>
<dbReference type="GO" id="GO:0007507">
    <property type="term" value="P:heart development"/>
    <property type="evidence" value="ECO:0000318"/>
    <property type="project" value="GO_Central"/>
</dbReference>
<dbReference type="GO" id="GO:0061061">
    <property type="term" value="P:muscle structure development"/>
    <property type="evidence" value="ECO:0000318"/>
    <property type="project" value="GO_Central"/>
</dbReference>
<dbReference type="CDD" id="cd09340">
    <property type="entry name" value="LIM1_Testin_like"/>
    <property type="match status" value="1"/>
</dbReference>
<dbReference type="CDD" id="cd09341">
    <property type="entry name" value="LIM2_Testin_like"/>
    <property type="match status" value="1"/>
</dbReference>
<dbReference type="FunFam" id="2.10.110.10:FF:000093">
    <property type="entry name" value="prickle-like protein 4 isoform X3"/>
    <property type="match status" value="1"/>
</dbReference>
<dbReference type="FunFam" id="2.10.110.10:FF:000005">
    <property type="entry name" value="Testin isoform 1"/>
    <property type="match status" value="1"/>
</dbReference>
<dbReference type="Gene3D" id="2.10.110.10">
    <property type="entry name" value="Cysteine Rich Protein"/>
    <property type="match status" value="2"/>
</dbReference>
<dbReference type="InterPro" id="IPR010442">
    <property type="entry name" value="PET_domain"/>
</dbReference>
<dbReference type="InterPro" id="IPR047120">
    <property type="entry name" value="Pk/Esn/Tes"/>
</dbReference>
<dbReference type="InterPro" id="IPR001781">
    <property type="entry name" value="Znf_LIM"/>
</dbReference>
<dbReference type="PANTHER" id="PTHR24211">
    <property type="entry name" value="LIM DOMAIN-CONTAINING PROTEIN"/>
    <property type="match status" value="1"/>
</dbReference>
<dbReference type="PANTHER" id="PTHR24211:SF35">
    <property type="entry name" value="PRICKLE-LIKE PROTEIN 4"/>
    <property type="match status" value="1"/>
</dbReference>
<dbReference type="Pfam" id="PF00412">
    <property type="entry name" value="LIM"/>
    <property type="match status" value="2"/>
</dbReference>
<dbReference type="Pfam" id="PF06297">
    <property type="entry name" value="PET"/>
    <property type="match status" value="1"/>
</dbReference>
<dbReference type="SMART" id="SM00132">
    <property type="entry name" value="LIM"/>
    <property type="match status" value="2"/>
</dbReference>
<dbReference type="SUPFAM" id="SSF57716">
    <property type="entry name" value="Glucocorticoid receptor-like (DNA-binding domain)"/>
    <property type="match status" value="1"/>
</dbReference>
<dbReference type="PROSITE" id="PS00478">
    <property type="entry name" value="LIM_DOMAIN_1"/>
    <property type="match status" value="2"/>
</dbReference>
<dbReference type="PROSITE" id="PS50023">
    <property type="entry name" value="LIM_DOMAIN_2"/>
    <property type="match status" value="2"/>
</dbReference>
<dbReference type="PROSITE" id="PS51303">
    <property type="entry name" value="PET"/>
    <property type="match status" value="1"/>
</dbReference>
<proteinExistence type="evidence at protein level"/>
<feature type="chain" id="PRO_0000231619" description="Prickle-like protein 4">
    <location>
        <begin position="1"/>
        <end position="344"/>
    </location>
</feature>
<feature type="domain" description="PET" evidence="2">
    <location>
        <begin position="1"/>
        <end position="81"/>
    </location>
</feature>
<feature type="domain" description="LIM zinc-binding 1" evidence="1">
    <location>
        <begin position="82"/>
        <end position="147"/>
    </location>
</feature>
<feature type="domain" description="LIM zinc-binding 2" evidence="1">
    <location>
        <begin position="148"/>
        <end position="207"/>
    </location>
</feature>
<feature type="region of interest" description="Disordered" evidence="3">
    <location>
        <begin position="253"/>
        <end position="344"/>
    </location>
</feature>
<feature type="compositionally biased region" description="Polar residues" evidence="3">
    <location>
        <begin position="257"/>
        <end position="271"/>
    </location>
</feature>
<feature type="compositionally biased region" description="Basic and acidic residues" evidence="3">
    <location>
        <begin position="272"/>
        <end position="296"/>
    </location>
</feature>
<feature type="compositionally biased region" description="Polar residues" evidence="3">
    <location>
        <begin position="322"/>
        <end position="344"/>
    </location>
</feature>
<feature type="splice variant" id="VSP_039377" description="In isoform 3." evidence="5">
    <original>MSP</original>
    <variation>MSVQNSGWPHQEDSPKPQDPGPPANSDSDSGHLPGEDPEDTHA</variation>
    <location>
        <begin position="1"/>
        <end position="3"/>
    </location>
</feature>
<feature type="splice variant" id="VSP_017857" description="In isoform 2." evidence="6">
    <original>ETGLDRTEGRDQTSVNSATLSRTLLAAAGGSSLQTQRGLPGSSPQQENRPGDKAEAPKGQEQCRLETIRDPKDTPFSTCSSSSDSEPEGFFLGERLPQSWKTPGSLQAEDSNASKTHCTMC</original>
    <variation>APPPHPPDPSLGARSSHRASLAGAFQGPPEPTPRRGRGCGARLPPRRGRRTPSGGGGGPWRGLSAAAAARTAQGLGGAGGWASPPLAAV</variation>
    <location>
        <begin position="224"/>
        <end position="344"/>
    </location>
</feature>
<feature type="sequence variant" id="VAR_056165" description="In dbSNP:rs28403585.">
    <original>S</original>
    <variation>R</variation>
    <location>
        <position position="266"/>
    </location>
</feature>
<feature type="sequence conflict" description="In Ref. 5; AAI10460." evidence="7" ref="5">
    <original>L</original>
    <variation>LL</variation>
    <location>
        <position position="248"/>
    </location>
</feature>
<protein>
    <recommendedName>
        <fullName>Prickle-like protein 4</fullName>
    </recommendedName>
    <alternativeName>
        <fullName>Overexpressed breast tumor protein</fullName>
    </alternativeName>
</protein>
<comment type="interaction">
    <interactant intactId="EBI-54789391">
        <id>Q2TBC4</id>
    </interactant>
    <interactant intactId="EBI-11056820">
        <id>Q6UB28</id>
        <label>METAP1D</label>
    </interactant>
    <organismsDiffer>false</organismsDiffer>
    <experiments>2</experiments>
</comment>
<comment type="alternative products">
    <event type="alternative splicing"/>
    <isoform>
        <id>Q2TBC4-1</id>
        <name>1</name>
        <sequence type="displayed"/>
    </isoform>
    <isoform>
        <id>Q2TBC4-2</id>
        <name>2</name>
        <sequence type="described" ref="VSP_017857"/>
    </isoform>
    <isoform>
        <id>Q2TBC4-3</id>
        <name>3</name>
        <sequence type="described" ref="VSP_039377"/>
    </isoform>
</comment>
<comment type="tissue specificity">
    <text evidence="4">Expressed in a broad range of normal tissues as well as in hepatocellular carcinoma, breast cancer and prostate cancer tissues.</text>
</comment>
<comment type="similarity">
    <text evidence="7">Belongs to the prickle / espinas / testin family.</text>
</comment>
<organism>
    <name type="scientific">Homo sapiens</name>
    <name type="common">Human</name>
    <dbReference type="NCBI Taxonomy" id="9606"/>
    <lineage>
        <taxon>Eukaryota</taxon>
        <taxon>Metazoa</taxon>
        <taxon>Chordata</taxon>
        <taxon>Craniata</taxon>
        <taxon>Vertebrata</taxon>
        <taxon>Euteleostomi</taxon>
        <taxon>Mammalia</taxon>
        <taxon>Eutheria</taxon>
        <taxon>Euarchontoglires</taxon>
        <taxon>Primates</taxon>
        <taxon>Haplorrhini</taxon>
        <taxon>Catarrhini</taxon>
        <taxon>Hominidae</taxon>
        <taxon>Homo</taxon>
    </lineage>
</organism>
<keyword id="KW-0025">Alternative splicing</keyword>
<keyword id="KW-0440">LIM domain</keyword>
<keyword id="KW-0479">Metal-binding</keyword>
<keyword id="KW-1185">Reference proteome</keyword>
<keyword id="KW-0677">Repeat</keyword>
<keyword id="KW-0862">Zinc</keyword>
<reference key="1">
    <citation type="journal article" date="2007" name="BMC Genomics">
        <title>The full-ORF clone resource of the German cDNA consortium.</title>
        <authorList>
            <person name="Bechtel S."/>
            <person name="Rosenfelder H."/>
            <person name="Duda A."/>
            <person name="Schmidt C.P."/>
            <person name="Ernst U."/>
            <person name="Wellenreuther R."/>
            <person name="Mehrle A."/>
            <person name="Schuster C."/>
            <person name="Bahr A."/>
            <person name="Bloecker H."/>
            <person name="Heubner D."/>
            <person name="Hoerlein A."/>
            <person name="Michel G."/>
            <person name="Wedler H."/>
            <person name="Koehrer K."/>
            <person name="Ottenwaelder B."/>
            <person name="Poustka A."/>
            <person name="Wiemann S."/>
            <person name="Schupp I."/>
        </authorList>
    </citation>
    <scope>NUCLEOTIDE SEQUENCE [LARGE SCALE MRNA] (ISOFORM 2)</scope>
    <source>
        <tissue>Amygdala</tissue>
    </source>
</reference>
<reference key="2">
    <citation type="journal article" date="2004" name="Nat. Genet.">
        <title>Complete sequencing and characterization of 21,243 full-length human cDNAs.</title>
        <authorList>
            <person name="Ota T."/>
            <person name="Suzuki Y."/>
            <person name="Nishikawa T."/>
            <person name="Otsuki T."/>
            <person name="Sugiyama T."/>
            <person name="Irie R."/>
            <person name="Wakamatsu A."/>
            <person name="Hayashi K."/>
            <person name="Sato H."/>
            <person name="Nagai K."/>
            <person name="Kimura K."/>
            <person name="Makita H."/>
            <person name="Sekine M."/>
            <person name="Obayashi M."/>
            <person name="Nishi T."/>
            <person name="Shibahara T."/>
            <person name="Tanaka T."/>
            <person name="Ishii S."/>
            <person name="Yamamoto J."/>
            <person name="Saito K."/>
            <person name="Kawai Y."/>
            <person name="Isono Y."/>
            <person name="Nakamura Y."/>
            <person name="Nagahari K."/>
            <person name="Murakami K."/>
            <person name="Yasuda T."/>
            <person name="Iwayanagi T."/>
            <person name="Wagatsuma M."/>
            <person name="Shiratori A."/>
            <person name="Sudo H."/>
            <person name="Hosoiri T."/>
            <person name="Kaku Y."/>
            <person name="Kodaira H."/>
            <person name="Kondo H."/>
            <person name="Sugawara M."/>
            <person name="Takahashi M."/>
            <person name="Kanda K."/>
            <person name="Yokoi T."/>
            <person name="Furuya T."/>
            <person name="Kikkawa E."/>
            <person name="Omura Y."/>
            <person name="Abe K."/>
            <person name="Kamihara K."/>
            <person name="Katsuta N."/>
            <person name="Sato K."/>
            <person name="Tanikawa M."/>
            <person name="Yamazaki M."/>
            <person name="Ninomiya K."/>
            <person name="Ishibashi T."/>
            <person name="Yamashita H."/>
            <person name="Murakawa K."/>
            <person name="Fujimori K."/>
            <person name="Tanai H."/>
            <person name="Kimata M."/>
            <person name="Watanabe M."/>
            <person name="Hiraoka S."/>
            <person name="Chiba Y."/>
            <person name="Ishida S."/>
            <person name="Ono Y."/>
            <person name="Takiguchi S."/>
            <person name="Watanabe S."/>
            <person name="Yosida M."/>
            <person name="Hotuta T."/>
            <person name="Kusano J."/>
            <person name="Kanehori K."/>
            <person name="Takahashi-Fujii A."/>
            <person name="Hara H."/>
            <person name="Tanase T.-O."/>
            <person name="Nomura Y."/>
            <person name="Togiya S."/>
            <person name="Komai F."/>
            <person name="Hara R."/>
            <person name="Takeuchi K."/>
            <person name="Arita M."/>
            <person name="Imose N."/>
            <person name="Musashino K."/>
            <person name="Yuuki H."/>
            <person name="Oshima A."/>
            <person name="Sasaki N."/>
            <person name="Aotsuka S."/>
            <person name="Yoshikawa Y."/>
            <person name="Matsunawa H."/>
            <person name="Ichihara T."/>
            <person name="Shiohata N."/>
            <person name="Sano S."/>
            <person name="Moriya S."/>
            <person name="Momiyama H."/>
            <person name="Satoh N."/>
            <person name="Takami S."/>
            <person name="Terashima Y."/>
            <person name="Suzuki O."/>
            <person name="Nakagawa S."/>
            <person name="Senoh A."/>
            <person name="Mizoguchi H."/>
            <person name="Goto Y."/>
            <person name="Shimizu F."/>
            <person name="Wakebe H."/>
            <person name="Hishigaki H."/>
            <person name="Watanabe T."/>
            <person name="Sugiyama A."/>
            <person name="Takemoto M."/>
            <person name="Kawakami B."/>
            <person name="Yamazaki M."/>
            <person name="Watanabe K."/>
            <person name="Kumagai A."/>
            <person name="Itakura S."/>
            <person name="Fukuzumi Y."/>
            <person name="Fujimori Y."/>
            <person name="Komiyama M."/>
            <person name="Tashiro H."/>
            <person name="Tanigami A."/>
            <person name="Fujiwara T."/>
            <person name="Ono T."/>
            <person name="Yamada K."/>
            <person name="Fujii Y."/>
            <person name="Ozaki K."/>
            <person name="Hirao M."/>
            <person name="Ohmori Y."/>
            <person name="Kawabata A."/>
            <person name="Hikiji T."/>
            <person name="Kobatake N."/>
            <person name="Inagaki H."/>
            <person name="Ikema Y."/>
            <person name="Okamoto S."/>
            <person name="Okitani R."/>
            <person name="Kawakami T."/>
            <person name="Noguchi S."/>
            <person name="Itoh T."/>
            <person name="Shigeta K."/>
            <person name="Senba T."/>
            <person name="Matsumura K."/>
            <person name="Nakajima Y."/>
            <person name="Mizuno T."/>
            <person name="Morinaga M."/>
            <person name="Sasaki M."/>
            <person name="Togashi T."/>
            <person name="Oyama M."/>
            <person name="Hata H."/>
            <person name="Watanabe M."/>
            <person name="Komatsu T."/>
            <person name="Mizushima-Sugano J."/>
            <person name="Satoh T."/>
            <person name="Shirai Y."/>
            <person name="Takahashi Y."/>
            <person name="Nakagawa K."/>
            <person name="Okumura K."/>
            <person name="Nagase T."/>
            <person name="Nomura N."/>
            <person name="Kikuchi H."/>
            <person name="Masuho Y."/>
            <person name="Yamashita R."/>
            <person name="Nakai K."/>
            <person name="Yada T."/>
            <person name="Nakamura Y."/>
            <person name="Ohara O."/>
            <person name="Isogai T."/>
            <person name="Sugano S."/>
        </authorList>
    </citation>
    <scope>NUCLEOTIDE SEQUENCE [LARGE SCALE MRNA] (ISOFORM 3)</scope>
    <source>
        <tissue>Stomach</tissue>
    </source>
</reference>
<reference key="3">
    <citation type="journal article" date="2003" name="Nature">
        <title>The DNA sequence and analysis of human chromosome 6.</title>
        <authorList>
            <person name="Mungall A.J."/>
            <person name="Palmer S.A."/>
            <person name="Sims S.K."/>
            <person name="Edwards C.A."/>
            <person name="Ashurst J.L."/>
            <person name="Wilming L."/>
            <person name="Jones M.C."/>
            <person name="Horton R."/>
            <person name="Hunt S.E."/>
            <person name="Scott C.E."/>
            <person name="Gilbert J.G.R."/>
            <person name="Clamp M.E."/>
            <person name="Bethel G."/>
            <person name="Milne S."/>
            <person name="Ainscough R."/>
            <person name="Almeida J.P."/>
            <person name="Ambrose K.D."/>
            <person name="Andrews T.D."/>
            <person name="Ashwell R.I.S."/>
            <person name="Babbage A.K."/>
            <person name="Bagguley C.L."/>
            <person name="Bailey J."/>
            <person name="Banerjee R."/>
            <person name="Barker D.J."/>
            <person name="Barlow K.F."/>
            <person name="Bates K."/>
            <person name="Beare D.M."/>
            <person name="Beasley H."/>
            <person name="Beasley O."/>
            <person name="Bird C.P."/>
            <person name="Blakey S.E."/>
            <person name="Bray-Allen S."/>
            <person name="Brook J."/>
            <person name="Brown A.J."/>
            <person name="Brown J.Y."/>
            <person name="Burford D.C."/>
            <person name="Burrill W."/>
            <person name="Burton J."/>
            <person name="Carder C."/>
            <person name="Carter N.P."/>
            <person name="Chapman J.C."/>
            <person name="Clark S.Y."/>
            <person name="Clark G."/>
            <person name="Clee C.M."/>
            <person name="Clegg S."/>
            <person name="Cobley V."/>
            <person name="Collier R.E."/>
            <person name="Collins J.E."/>
            <person name="Colman L.K."/>
            <person name="Corby N.R."/>
            <person name="Coville G.J."/>
            <person name="Culley K.M."/>
            <person name="Dhami P."/>
            <person name="Davies J."/>
            <person name="Dunn M."/>
            <person name="Earthrowl M.E."/>
            <person name="Ellington A.E."/>
            <person name="Evans K.A."/>
            <person name="Faulkner L."/>
            <person name="Francis M.D."/>
            <person name="Frankish A."/>
            <person name="Frankland J."/>
            <person name="French L."/>
            <person name="Garner P."/>
            <person name="Garnett J."/>
            <person name="Ghori M.J."/>
            <person name="Gilby L.M."/>
            <person name="Gillson C.J."/>
            <person name="Glithero R.J."/>
            <person name="Grafham D.V."/>
            <person name="Grant M."/>
            <person name="Gribble S."/>
            <person name="Griffiths C."/>
            <person name="Griffiths M.N.D."/>
            <person name="Hall R."/>
            <person name="Halls K.S."/>
            <person name="Hammond S."/>
            <person name="Harley J.L."/>
            <person name="Hart E.A."/>
            <person name="Heath P.D."/>
            <person name="Heathcott R."/>
            <person name="Holmes S.J."/>
            <person name="Howden P.J."/>
            <person name="Howe K.L."/>
            <person name="Howell G.R."/>
            <person name="Huckle E."/>
            <person name="Humphray S.J."/>
            <person name="Humphries M.D."/>
            <person name="Hunt A.R."/>
            <person name="Johnson C.M."/>
            <person name="Joy A.A."/>
            <person name="Kay M."/>
            <person name="Keenan S.J."/>
            <person name="Kimberley A.M."/>
            <person name="King A."/>
            <person name="Laird G.K."/>
            <person name="Langford C."/>
            <person name="Lawlor S."/>
            <person name="Leongamornlert D.A."/>
            <person name="Leversha M."/>
            <person name="Lloyd C.R."/>
            <person name="Lloyd D.M."/>
            <person name="Loveland J.E."/>
            <person name="Lovell J."/>
            <person name="Martin S."/>
            <person name="Mashreghi-Mohammadi M."/>
            <person name="Maslen G.L."/>
            <person name="Matthews L."/>
            <person name="McCann O.T."/>
            <person name="McLaren S.J."/>
            <person name="McLay K."/>
            <person name="McMurray A."/>
            <person name="Moore M.J.F."/>
            <person name="Mullikin J.C."/>
            <person name="Niblett D."/>
            <person name="Nickerson T."/>
            <person name="Novik K.L."/>
            <person name="Oliver K."/>
            <person name="Overton-Larty E.K."/>
            <person name="Parker A."/>
            <person name="Patel R."/>
            <person name="Pearce A.V."/>
            <person name="Peck A.I."/>
            <person name="Phillimore B.J.C.T."/>
            <person name="Phillips S."/>
            <person name="Plumb R.W."/>
            <person name="Porter K.M."/>
            <person name="Ramsey Y."/>
            <person name="Ranby S.A."/>
            <person name="Rice C.M."/>
            <person name="Ross M.T."/>
            <person name="Searle S.M."/>
            <person name="Sehra H.K."/>
            <person name="Sheridan E."/>
            <person name="Skuce C.D."/>
            <person name="Smith S."/>
            <person name="Smith M."/>
            <person name="Spraggon L."/>
            <person name="Squares S.L."/>
            <person name="Steward C.A."/>
            <person name="Sycamore N."/>
            <person name="Tamlyn-Hall G."/>
            <person name="Tester J."/>
            <person name="Theaker A.J."/>
            <person name="Thomas D.W."/>
            <person name="Thorpe A."/>
            <person name="Tracey A."/>
            <person name="Tromans A."/>
            <person name="Tubby B."/>
            <person name="Wall M."/>
            <person name="Wallis J.M."/>
            <person name="West A.P."/>
            <person name="White S.S."/>
            <person name="Whitehead S.L."/>
            <person name="Whittaker H."/>
            <person name="Wild A."/>
            <person name="Willey D.J."/>
            <person name="Wilmer T.E."/>
            <person name="Wood J.M."/>
            <person name="Wray P.W."/>
            <person name="Wyatt J.C."/>
            <person name="Young L."/>
            <person name="Younger R.M."/>
            <person name="Bentley D.R."/>
            <person name="Coulson A."/>
            <person name="Durbin R.M."/>
            <person name="Hubbard T."/>
            <person name="Sulston J.E."/>
            <person name="Dunham I."/>
            <person name="Rogers J."/>
            <person name="Beck S."/>
        </authorList>
    </citation>
    <scope>NUCLEOTIDE SEQUENCE [LARGE SCALE GENOMIC DNA]</scope>
</reference>
<reference key="4">
    <citation type="submission" date="2005-07" db="EMBL/GenBank/DDBJ databases">
        <authorList>
            <person name="Mural R.J."/>
            <person name="Istrail S."/>
            <person name="Sutton G.G."/>
            <person name="Florea L."/>
            <person name="Halpern A.L."/>
            <person name="Mobarry C.M."/>
            <person name="Lippert R."/>
            <person name="Walenz B."/>
            <person name="Shatkay H."/>
            <person name="Dew I."/>
            <person name="Miller J.R."/>
            <person name="Flanigan M.J."/>
            <person name="Edwards N.J."/>
            <person name="Bolanos R."/>
            <person name="Fasulo D."/>
            <person name="Halldorsson B.V."/>
            <person name="Hannenhalli S."/>
            <person name="Turner R."/>
            <person name="Yooseph S."/>
            <person name="Lu F."/>
            <person name="Nusskern D.R."/>
            <person name="Shue B.C."/>
            <person name="Zheng X.H."/>
            <person name="Zhong F."/>
            <person name="Delcher A.L."/>
            <person name="Huson D.H."/>
            <person name="Kravitz S.A."/>
            <person name="Mouchard L."/>
            <person name="Reinert K."/>
            <person name="Remington K.A."/>
            <person name="Clark A.G."/>
            <person name="Waterman M.S."/>
            <person name="Eichler E.E."/>
            <person name="Adams M.D."/>
            <person name="Hunkapiller M.W."/>
            <person name="Myers E.W."/>
            <person name="Venter J.C."/>
        </authorList>
    </citation>
    <scope>NUCLEOTIDE SEQUENCE [LARGE SCALE GENOMIC DNA]</scope>
</reference>
<reference key="5">
    <citation type="journal article" date="2004" name="Genome Res.">
        <title>The status, quality, and expansion of the NIH full-length cDNA project: the Mammalian Gene Collection (MGC).</title>
        <authorList>
            <consortium name="The MGC Project Team"/>
        </authorList>
    </citation>
    <scope>NUCLEOTIDE SEQUENCE [LARGE SCALE MRNA] (ISOFORM 1)</scope>
</reference>
<reference key="6">
    <citation type="journal article" date="2005" name="Int. J. Mol. Med.">
        <title>Characterization of OEBT, a LIM protein.</title>
        <authorList>
            <person name="Teufel A."/>
            <person name="Weinmann A."/>
            <person name="Galle P.R."/>
            <person name="Lohse A.W."/>
        </authorList>
    </citation>
    <scope>TISSUE SPECIFICITY</scope>
</reference>
<gene>
    <name type="primary">PRICKLE4</name>
    <name type="synonym">C6orf49</name>
    <name type="synonym">OEBT</name>
</gene>
<name>PRIC4_HUMAN</name>
<evidence type="ECO:0000255" key="1">
    <source>
        <dbReference type="PROSITE-ProRule" id="PRU00125"/>
    </source>
</evidence>
<evidence type="ECO:0000255" key="2">
    <source>
        <dbReference type="PROSITE-ProRule" id="PRU00636"/>
    </source>
</evidence>
<evidence type="ECO:0000256" key="3">
    <source>
        <dbReference type="SAM" id="MobiDB-lite"/>
    </source>
</evidence>
<evidence type="ECO:0000269" key="4">
    <source>
    </source>
</evidence>
<evidence type="ECO:0000303" key="5">
    <source>
    </source>
</evidence>
<evidence type="ECO:0000303" key="6">
    <source>
    </source>
</evidence>
<evidence type="ECO:0000305" key="7"/>
<sequence>MSPQGPAVLSLGSLCLDTNQAPNWTGLQTLLQQLPPQDIDERYCLALGEEERAELQLFCARRKQEALGQGVARLVLPKLEGHTCEKCRELLKPGEYGVFAARAGEQRCWHQPCFACQACGQALINLIYFYHDGQLYCGRHHAELLRPRCPACDQLIFSWRCTEAEGQRWHENHFCCQDCAGPLGGGRYALPGGSPCCPSCFENRYSDAGSSWAGALEGQAFLGETGLDRTEGRDQTSVNSATLSRTLLAAAGGSSLQTQRGLPGSSPQQENRPGDKAEAPKGQEQCRLETIRDPKDTPFSTCSSSSDSEPEGFFLGERLPQSWKTPGSLQAEDSNASKTHCTMC</sequence>